<feature type="chain" id="PRO_0000139883" description="Ribonuclease PH">
    <location>
        <begin position="1"/>
        <end position="241"/>
    </location>
</feature>
<feature type="binding site" evidence="1">
    <location>
        <position position="90"/>
    </location>
    <ligand>
        <name>phosphate</name>
        <dbReference type="ChEBI" id="CHEBI:43474"/>
        <note>substrate</note>
    </ligand>
</feature>
<feature type="binding site" evidence="1">
    <location>
        <begin position="128"/>
        <end position="130"/>
    </location>
    <ligand>
        <name>phosphate</name>
        <dbReference type="ChEBI" id="CHEBI:43474"/>
        <note>substrate</note>
    </ligand>
</feature>
<organism>
    <name type="scientific">Corynebacterium diphtheriae (strain ATCC 700971 / NCTC 13129 / Biotype gravis)</name>
    <dbReference type="NCBI Taxonomy" id="257309"/>
    <lineage>
        <taxon>Bacteria</taxon>
        <taxon>Bacillati</taxon>
        <taxon>Actinomycetota</taxon>
        <taxon>Actinomycetes</taxon>
        <taxon>Mycobacteriales</taxon>
        <taxon>Corynebacteriaceae</taxon>
        <taxon>Corynebacterium</taxon>
    </lineage>
</organism>
<name>RNPH_CORDI</name>
<evidence type="ECO:0000255" key="1">
    <source>
        <dbReference type="HAMAP-Rule" id="MF_00564"/>
    </source>
</evidence>
<gene>
    <name evidence="1" type="primary">rph</name>
    <name type="ordered locus">DIP1851</name>
</gene>
<accession>Q6NFN6</accession>
<proteinExistence type="inferred from homology"/>
<sequence>MTDFSRADGRAVDQMRTVKITRGFTSNPAGSVLVEFGNTRVMCTASVELGVPRFKRDSGEGWLTAEYAMLPAATAERNARESMRGKVKGRTHEISRLIGRSLRAAVDLDELGENTINIDCDVLQADGGTRTASITGAYVALADAIAVLKEQGVVPGNPLKAAVAAVSVGVIDGQVCLDLPYEEDSRADVDMNVIMQGDRFVEIQGTGEHNTFDRDELAVILDFAQKGCQELFAAQKAALEQ</sequence>
<dbReference type="EC" id="2.7.7.56" evidence="1"/>
<dbReference type="EMBL" id="BX248359">
    <property type="protein sequence ID" value="CAE50380.1"/>
    <property type="molecule type" value="Genomic_DNA"/>
</dbReference>
<dbReference type="RefSeq" id="WP_010935375.1">
    <property type="nucleotide sequence ID" value="NC_002935.2"/>
</dbReference>
<dbReference type="SMR" id="Q6NFN6"/>
<dbReference type="STRING" id="257309.DIP1851"/>
<dbReference type="KEGG" id="cdi:DIP1851"/>
<dbReference type="PATRIC" id="fig|257309.4.peg.1835"/>
<dbReference type="HOGENOM" id="CLU_050858_0_0_11"/>
<dbReference type="Proteomes" id="UP000002198">
    <property type="component" value="Chromosome"/>
</dbReference>
<dbReference type="GO" id="GO:0000175">
    <property type="term" value="F:3'-5'-RNA exonuclease activity"/>
    <property type="evidence" value="ECO:0007669"/>
    <property type="project" value="UniProtKB-UniRule"/>
</dbReference>
<dbReference type="GO" id="GO:0000049">
    <property type="term" value="F:tRNA binding"/>
    <property type="evidence" value="ECO:0007669"/>
    <property type="project" value="UniProtKB-UniRule"/>
</dbReference>
<dbReference type="GO" id="GO:0009022">
    <property type="term" value="F:tRNA nucleotidyltransferase activity"/>
    <property type="evidence" value="ECO:0007669"/>
    <property type="project" value="UniProtKB-UniRule"/>
</dbReference>
<dbReference type="GO" id="GO:0016075">
    <property type="term" value="P:rRNA catabolic process"/>
    <property type="evidence" value="ECO:0007669"/>
    <property type="project" value="UniProtKB-UniRule"/>
</dbReference>
<dbReference type="GO" id="GO:0006364">
    <property type="term" value="P:rRNA processing"/>
    <property type="evidence" value="ECO:0007669"/>
    <property type="project" value="UniProtKB-KW"/>
</dbReference>
<dbReference type="GO" id="GO:0008033">
    <property type="term" value="P:tRNA processing"/>
    <property type="evidence" value="ECO:0007669"/>
    <property type="project" value="UniProtKB-UniRule"/>
</dbReference>
<dbReference type="CDD" id="cd11362">
    <property type="entry name" value="RNase_PH_bact"/>
    <property type="match status" value="1"/>
</dbReference>
<dbReference type="FunFam" id="3.30.230.70:FF:000003">
    <property type="entry name" value="Ribonuclease PH"/>
    <property type="match status" value="1"/>
</dbReference>
<dbReference type="Gene3D" id="3.30.230.70">
    <property type="entry name" value="GHMP Kinase, N-terminal domain"/>
    <property type="match status" value="1"/>
</dbReference>
<dbReference type="HAMAP" id="MF_00564">
    <property type="entry name" value="RNase_PH"/>
    <property type="match status" value="1"/>
</dbReference>
<dbReference type="InterPro" id="IPR001247">
    <property type="entry name" value="ExoRNase_PH_dom1"/>
</dbReference>
<dbReference type="InterPro" id="IPR015847">
    <property type="entry name" value="ExoRNase_PH_dom2"/>
</dbReference>
<dbReference type="InterPro" id="IPR036345">
    <property type="entry name" value="ExoRNase_PH_dom2_sf"/>
</dbReference>
<dbReference type="InterPro" id="IPR027408">
    <property type="entry name" value="PNPase/RNase_PH_dom_sf"/>
</dbReference>
<dbReference type="InterPro" id="IPR020568">
    <property type="entry name" value="Ribosomal_Su5_D2-typ_SF"/>
</dbReference>
<dbReference type="InterPro" id="IPR050080">
    <property type="entry name" value="RNase_PH"/>
</dbReference>
<dbReference type="InterPro" id="IPR002381">
    <property type="entry name" value="RNase_PH_bac-type"/>
</dbReference>
<dbReference type="InterPro" id="IPR018336">
    <property type="entry name" value="RNase_PH_CS"/>
</dbReference>
<dbReference type="NCBIfam" id="TIGR01966">
    <property type="entry name" value="RNasePH"/>
    <property type="match status" value="1"/>
</dbReference>
<dbReference type="PANTHER" id="PTHR11953">
    <property type="entry name" value="EXOSOME COMPLEX COMPONENT"/>
    <property type="match status" value="1"/>
</dbReference>
<dbReference type="PANTHER" id="PTHR11953:SF0">
    <property type="entry name" value="EXOSOME COMPLEX COMPONENT RRP41"/>
    <property type="match status" value="1"/>
</dbReference>
<dbReference type="Pfam" id="PF01138">
    <property type="entry name" value="RNase_PH"/>
    <property type="match status" value="1"/>
</dbReference>
<dbReference type="Pfam" id="PF03725">
    <property type="entry name" value="RNase_PH_C"/>
    <property type="match status" value="1"/>
</dbReference>
<dbReference type="SUPFAM" id="SSF55666">
    <property type="entry name" value="Ribonuclease PH domain 2-like"/>
    <property type="match status" value="1"/>
</dbReference>
<dbReference type="SUPFAM" id="SSF54211">
    <property type="entry name" value="Ribosomal protein S5 domain 2-like"/>
    <property type="match status" value="1"/>
</dbReference>
<dbReference type="PROSITE" id="PS01277">
    <property type="entry name" value="RIBONUCLEASE_PH"/>
    <property type="match status" value="1"/>
</dbReference>
<reference key="1">
    <citation type="journal article" date="2003" name="Nucleic Acids Res.">
        <title>The complete genome sequence and analysis of Corynebacterium diphtheriae NCTC13129.</title>
        <authorList>
            <person name="Cerdeno-Tarraga A.-M."/>
            <person name="Efstratiou A."/>
            <person name="Dover L.G."/>
            <person name="Holden M.T.G."/>
            <person name="Pallen M.J."/>
            <person name="Bentley S.D."/>
            <person name="Besra G.S."/>
            <person name="Churcher C.M."/>
            <person name="James K.D."/>
            <person name="De Zoysa A."/>
            <person name="Chillingworth T."/>
            <person name="Cronin A."/>
            <person name="Dowd L."/>
            <person name="Feltwell T."/>
            <person name="Hamlin N."/>
            <person name="Holroyd S."/>
            <person name="Jagels K."/>
            <person name="Moule S."/>
            <person name="Quail M.A."/>
            <person name="Rabbinowitsch E."/>
            <person name="Rutherford K.M."/>
            <person name="Thomson N.R."/>
            <person name="Unwin L."/>
            <person name="Whitehead S."/>
            <person name="Barrell B.G."/>
            <person name="Parkhill J."/>
        </authorList>
    </citation>
    <scope>NUCLEOTIDE SEQUENCE [LARGE SCALE GENOMIC DNA]</scope>
    <source>
        <strain>ATCC 700971 / NCTC 13129 / Biotype gravis</strain>
    </source>
</reference>
<protein>
    <recommendedName>
        <fullName evidence="1">Ribonuclease PH</fullName>
        <shortName evidence="1">RNase PH</shortName>
        <ecNumber evidence="1">2.7.7.56</ecNumber>
    </recommendedName>
    <alternativeName>
        <fullName evidence="1">tRNA nucleotidyltransferase</fullName>
    </alternativeName>
</protein>
<keyword id="KW-0548">Nucleotidyltransferase</keyword>
<keyword id="KW-1185">Reference proteome</keyword>
<keyword id="KW-0694">RNA-binding</keyword>
<keyword id="KW-0698">rRNA processing</keyword>
<keyword id="KW-0808">Transferase</keyword>
<keyword id="KW-0819">tRNA processing</keyword>
<keyword id="KW-0820">tRNA-binding</keyword>
<comment type="function">
    <text evidence="1">Phosphorolytic 3'-5' exoribonuclease that plays an important role in tRNA 3'-end maturation. Removes nucleotide residues following the 3'-CCA terminus of tRNAs; can also add nucleotides to the ends of RNA molecules by using nucleoside diphosphates as substrates, but this may not be physiologically important. Probably plays a role in initiation of 16S rRNA degradation (leading to ribosome degradation) during starvation.</text>
</comment>
<comment type="catalytic activity">
    <reaction evidence="1">
        <text>tRNA(n+1) + phosphate = tRNA(n) + a ribonucleoside 5'-diphosphate</text>
        <dbReference type="Rhea" id="RHEA:10628"/>
        <dbReference type="Rhea" id="RHEA-COMP:17343"/>
        <dbReference type="Rhea" id="RHEA-COMP:17344"/>
        <dbReference type="ChEBI" id="CHEBI:43474"/>
        <dbReference type="ChEBI" id="CHEBI:57930"/>
        <dbReference type="ChEBI" id="CHEBI:173114"/>
        <dbReference type="EC" id="2.7.7.56"/>
    </reaction>
</comment>
<comment type="subunit">
    <text evidence="1">Homohexameric ring arranged as a trimer of dimers.</text>
</comment>
<comment type="similarity">
    <text evidence="1">Belongs to the RNase PH family.</text>
</comment>